<reference key="1">
    <citation type="journal article" date="1990" name="J. Biol. Chem.">
        <title>The cDNA sequences encoding two components of the polymeric fraction of the intracellular hemoglobin of Glycera dibranchiata.</title>
        <authorList>
            <person name="Zafar R.S."/>
            <person name="Chow L.H."/>
            <person name="Stern M.S."/>
            <person name="Scully J.S."/>
            <person name="Sharma P.R."/>
            <person name="Vinogradov S.N."/>
            <person name="Walz D.A."/>
        </authorList>
    </citation>
    <scope>NUCLEOTIDE SEQUENCE [MRNA]</scope>
</reference>
<evidence type="ECO:0000255" key="1">
    <source>
        <dbReference type="PROSITE-ProRule" id="PRU00238"/>
    </source>
</evidence>
<dbReference type="EMBL" id="M55443">
    <property type="protein sequence ID" value="AAA29160.1"/>
    <property type="molecule type" value="mRNA"/>
</dbReference>
<dbReference type="PIR" id="A36529">
    <property type="entry name" value="A36529"/>
</dbReference>
<dbReference type="SMR" id="P21659"/>
<dbReference type="GO" id="GO:0020037">
    <property type="term" value="F:heme binding"/>
    <property type="evidence" value="ECO:0007669"/>
    <property type="project" value="InterPro"/>
</dbReference>
<dbReference type="GO" id="GO:0046872">
    <property type="term" value="F:metal ion binding"/>
    <property type="evidence" value="ECO:0007669"/>
    <property type="project" value="UniProtKB-KW"/>
</dbReference>
<dbReference type="GO" id="GO:0019825">
    <property type="term" value="F:oxygen binding"/>
    <property type="evidence" value="ECO:0007669"/>
    <property type="project" value="InterPro"/>
</dbReference>
<dbReference type="GO" id="GO:0005344">
    <property type="term" value="F:oxygen carrier activity"/>
    <property type="evidence" value="ECO:0007669"/>
    <property type="project" value="UniProtKB-KW"/>
</dbReference>
<dbReference type="CDD" id="cd01040">
    <property type="entry name" value="Mb-like"/>
    <property type="match status" value="1"/>
</dbReference>
<dbReference type="Gene3D" id="1.10.490.10">
    <property type="entry name" value="Globins"/>
    <property type="match status" value="1"/>
</dbReference>
<dbReference type="InterPro" id="IPR000971">
    <property type="entry name" value="Globin"/>
</dbReference>
<dbReference type="InterPro" id="IPR050532">
    <property type="entry name" value="Globin-like_OT"/>
</dbReference>
<dbReference type="InterPro" id="IPR009050">
    <property type="entry name" value="Globin-like_sf"/>
</dbReference>
<dbReference type="InterPro" id="IPR012292">
    <property type="entry name" value="Globin/Proto"/>
</dbReference>
<dbReference type="InterPro" id="IPR044399">
    <property type="entry name" value="Mb-like_M"/>
</dbReference>
<dbReference type="PANTHER" id="PTHR46458">
    <property type="entry name" value="BLR2807 PROTEIN"/>
    <property type="match status" value="1"/>
</dbReference>
<dbReference type="PANTHER" id="PTHR46458:SF1">
    <property type="entry name" value="GEO09476P1"/>
    <property type="match status" value="1"/>
</dbReference>
<dbReference type="Pfam" id="PF00042">
    <property type="entry name" value="Globin"/>
    <property type="match status" value="1"/>
</dbReference>
<dbReference type="PRINTS" id="PR01907">
    <property type="entry name" value="WORMGLOBIN"/>
</dbReference>
<dbReference type="SUPFAM" id="SSF46458">
    <property type="entry name" value="Globin-like"/>
    <property type="match status" value="1"/>
</dbReference>
<dbReference type="PROSITE" id="PS01033">
    <property type="entry name" value="GLOBIN"/>
    <property type="match status" value="1"/>
</dbReference>
<comment type="subunit">
    <text>Polymer.</text>
</comment>
<comment type="miscellaneous">
    <text>This protein is one of at least six components in the polymeric fraction of Glycera hemoglobin.</text>
</comment>
<comment type="similarity">
    <text evidence="1">Belongs to the globin family.</text>
</comment>
<accession>P21659</accession>
<name>GLBP2_GLYDI</name>
<feature type="chain" id="PRO_0000052504" description="Globin, polymeric component P2">
    <location>
        <begin position="1"/>
        <end position="147"/>
    </location>
</feature>
<feature type="domain" description="Globin" evidence="1">
    <location>
        <begin position="2"/>
        <end position="146"/>
    </location>
</feature>
<feature type="binding site" description="proximal binding residue" evidence="1">
    <location>
        <position position="96"/>
    </location>
    <ligand>
        <name>heme b</name>
        <dbReference type="ChEBI" id="CHEBI:60344"/>
    </ligand>
    <ligandPart>
        <name>Fe</name>
        <dbReference type="ChEBI" id="CHEBI:18248"/>
    </ligandPart>
</feature>
<organism>
    <name type="scientific">Glycera dibranchiata</name>
    <name type="common">Bloodworm</name>
    <dbReference type="NCBI Taxonomy" id="6350"/>
    <lineage>
        <taxon>Eukaryota</taxon>
        <taxon>Metazoa</taxon>
        <taxon>Spiralia</taxon>
        <taxon>Lophotrochozoa</taxon>
        <taxon>Annelida</taxon>
        <taxon>Polychaeta</taxon>
        <taxon>Errantia</taxon>
        <taxon>Phyllodocida</taxon>
        <taxon>Glyceridae</taxon>
        <taxon>Glycera</taxon>
    </lineage>
</organism>
<keyword id="KW-0349">Heme</keyword>
<keyword id="KW-0408">Iron</keyword>
<keyword id="KW-0479">Metal-binding</keyword>
<keyword id="KW-0561">Oxygen transport</keyword>
<keyword id="KW-0813">Transport</keyword>
<protein>
    <recommendedName>
        <fullName>Globin, polymeric component P2</fullName>
    </recommendedName>
</protein>
<sequence>MPLTADQVAALKASWPEVSAGDGGGQLGLELFTKYFHENPQMMFIFGYSGRTDALKHNAKLQNHGKVIIDQIGKAVAEMDNAKQMAGTLHALGVRHKGFGDIRADFFPALGMCLLDAMEEKVPGLNRTLWAAAYREISDALVAGLES</sequence>
<proteinExistence type="evidence at transcript level"/>